<reference key="1">
    <citation type="journal article" date="2008" name="J. Bacteriol.">
        <title>Complete genome sequence of Leuconostoc citreum KM20.</title>
        <authorList>
            <person name="Kim J.F."/>
            <person name="Jeong H."/>
            <person name="Lee J.-S."/>
            <person name="Choi S.-H."/>
            <person name="Ha M."/>
            <person name="Hur C.-G."/>
            <person name="Kim J.-S."/>
            <person name="Lee S."/>
            <person name="Park H.-S."/>
            <person name="Park Y.-H."/>
            <person name="Oh T.K."/>
        </authorList>
    </citation>
    <scope>NUCLEOTIDE SEQUENCE [LARGE SCALE GENOMIC DNA]</scope>
    <source>
        <strain>KM20</strain>
    </source>
</reference>
<gene>
    <name evidence="1" type="primary">rplS</name>
    <name type="ordered locus">LCK_01245</name>
</gene>
<feature type="chain" id="PRO_0000340739" description="Large ribosomal subunit protein bL19">
    <location>
        <begin position="1"/>
        <end position="119"/>
    </location>
</feature>
<sequence length="119" mass="13572">MRQNTILENVTSAQLRSDIPEFRAGDTVKVYAKIVEGSRERIQLFEGVVIKRKGSGIQATYTVRKISSGVGVERTFPLHSPRVEKIEVVRFGAVRRAKLYYLRALQGKAARIKERRRDV</sequence>
<protein>
    <recommendedName>
        <fullName evidence="1">Large ribosomal subunit protein bL19</fullName>
    </recommendedName>
    <alternativeName>
        <fullName evidence="2">50S ribosomal protein L19</fullName>
    </alternativeName>
</protein>
<accession>B1MZW8</accession>
<dbReference type="EMBL" id="DQ489736">
    <property type="protein sequence ID" value="ACA83070.1"/>
    <property type="molecule type" value="Genomic_DNA"/>
</dbReference>
<dbReference type="RefSeq" id="WP_004901922.1">
    <property type="nucleotide sequence ID" value="NC_010471.1"/>
</dbReference>
<dbReference type="SMR" id="B1MZW8"/>
<dbReference type="STRING" id="349519.LCK_01245"/>
<dbReference type="GeneID" id="61101741"/>
<dbReference type="KEGG" id="lci:LCK_01245"/>
<dbReference type="eggNOG" id="COG0335">
    <property type="taxonomic scope" value="Bacteria"/>
</dbReference>
<dbReference type="HOGENOM" id="CLU_103507_2_1_9"/>
<dbReference type="OrthoDB" id="9803541at2"/>
<dbReference type="Proteomes" id="UP000002166">
    <property type="component" value="Chromosome"/>
</dbReference>
<dbReference type="GO" id="GO:0022625">
    <property type="term" value="C:cytosolic large ribosomal subunit"/>
    <property type="evidence" value="ECO:0007669"/>
    <property type="project" value="TreeGrafter"/>
</dbReference>
<dbReference type="GO" id="GO:0003735">
    <property type="term" value="F:structural constituent of ribosome"/>
    <property type="evidence" value="ECO:0007669"/>
    <property type="project" value="InterPro"/>
</dbReference>
<dbReference type="GO" id="GO:0006412">
    <property type="term" value="P:translation"/>
    <property type="evidence" value="ECO:0007669"/>
    <property type="project" value="UniProtKB-UniRule"/>
</dbReference>
<dbReference type="FunFam" id="2.30.30.790:FF:000001">
    <property type="entry name" value="50S ribosomal protein L19"/>
    <property type="match status" value="1"/>
</dbReference>
<dbReference type="Gene3D" id="2.30.30.790">
    <property type="match status" value="1"/>
</dbReference>
<dbReference type="HAMAP" id="MF_00402">
    <property type="entry name" value="Ribosomal_bL19"/>
    <property type="match status" value="1"/>
</dbReference>
<dbReference type="InterPro" id="IPR001857">
    <property type="entry name" value="Ribosomal_bL19"/>
</dbReference>
<dbReference type="InterPro" id="IPR018257">
    <property type="entry name" value="Ribosomal_bL19_CS"/>
</dbReference>
<dbReference type="InterPro" id="IPR038657">
    <property type="entry name" value="Ribosomal_bL19_sf"/>
</dbReference>
<dbReference type="InterPro" id="IPR008991">
    <property type="entry name" value="Translation_prot_SH3-like_sf"/>
</dbReference>
<dbReference type="NCBIfam" id="TIGR01024">
    <property type="entry name" value="rplS_bact"/>
    <property type="match status" value="1"/>
</dbReference>
<dbReference type="PANTHER" id="PTHR15680:SF9">
    <property type="entry name" value="LARGE RIBOSOMAL SUBUNIT PROTEIN BL19M"/>
    <property type="match status" value="1"/>
</dbReference>
<dbReference type="PANTHER" id="PTHR15680">
    <property type="entry name" value="RIBOSOMAL PROTEIN L19"/>
    <property type="match status" value="1"/>
</dbReference>
<dbReference type="Pfam" id="PF01245">
    <property type="entry name" value="Ribosomal_L19"/>
    <property type="match status" value="1"/>
</dbReference>
<dbReference type="PIRSF" id="PIRSF002191">
    <property type="entry name" value="Ribosomal_L19"/>
    <property type="match status" value="1"/>
</dbReference>
<dbReference type="PRINTS" id="PR00061">
    <property type="entry name" value="RIBOSOMALL19"/>
</dbReference>
<dbReference type="SUPFAM" id="SSF50104">
    <property type="entry name" value="Translation proteins SH3-like domain"/>
    <property type="match status" value="1"/>
</dbReference>
<dbReference type="PROSITE" id="PS01015">
    <property type="entry name" value="RIBOSOMAL_L19"/>
    <property type="match status" value="1"/>
</dbReference>
<name>RL19_LEUCK</name>
<organism>
    <name type="scientific">Leuconostoc citreum (strain KM20)</name>
    <dbReference type="NCBI Taxonomy" id="349519"/>
    <lineage>
        <taxon>Bacteria</taxon>
        <taxon>Bacillati</taxon>
        <taxon>Bacillota</taxon>
        <taxon>Bacilli</taxon>
        <taxon>Lactobacillales</taxon>
        <taxon>Lactobacillaceae</taxon>
        <taxon>Leuconostoc</taxon>
    </lineage>
</organism>
<evidence type="ECO:0000255" key="1">
    <source>
        <dbReference type="HAMAP-Rule" id="MF_00402"/>
    </source>
</evidence>
<evidence type="ECO:0000305" key="2"/>
<proteinExistence type="inferred from homology"/>
<comment type="function">
    <text evidence="1">This protein is located at the 30S-50S ribosomal subunit interface and may play a role in the structure and function of the aminoacyl-tRNA binding site.</text>
</comment>
<comment type="similarity">
    <text evidence="1">Belongs to the bacterial ribosomal protein bL19 family.</text>
</comment>
<keyword id="KW-1185">Reference proteome</keyword>
<keyword id="KW-0687">Ribonucleoprotein</keyword>
<keyword id="KW-0689">Ribosomal protein</keyword>